<keyword id="KW-1003">Cell membrane</keyword>
<keyword id="KW-0325">Glycoprotein</keyword>
<keyword id="KW-0472">Membrane</keyword>
<keyword id="KW-1185">Reference proteome</keyword>
<keyword id="KW-0812">Transmembrane</keyword>
<keyword id="KW-1133">Transmembrane helix</keyword>
<gene>
    <name type="primary">Nkain1</name>
    <name type="synonym">Fam77c</name>
</gene>
<feature type="chain" id="PRO_0000263644" description="Sodium/potassium-transporting ATPase subunit beta-1-interacting protein 1">
    <location>
        <begin position="1"/>
        <end position="207"/>
    </location>
</feature>
<feature type="transmembrane region" description="Helical" evidence="1">
    <location>
        <begin position="2"/>
        <end position="22"/>
    </location>
</feature>
<feature type="transmembrane region" description="Helical" evidence="1">
    <location>
        <begin position="35"/>
        <end position="55"/>
    </location>
</feature>
<feature type="transmembrane region" description="Helical" evidence="1">
    <location>
        <begin position="62"/>
        <end position="82"/>
    </location>
</feature>
<feature type="transmembrane region" description="Helical" evidence="1">
    <location>
        <begin position="147"/>
        <end position="167"/>
    </location>
</feature>
<feature type="glycosylation site" description="N-linked (GlcNAc...) asparagine" evidence="1">
    <location>
        <position position="100"/>
    </location>
</feature>
<sequence length="207" mass="23551">MGKCSGRCTLVAFCCLQLVAALQRQIFDFLGYQWAPILANFLHIMAVILGIFGTVQYRSRYLILYAAWLVLWVGWNAFIICFYLEVGQLSQDRDFIMTFNTSLHRSWWMENGPGCLVTPVLNSRLALEDHHVISVTGCLLDYPYIEALSSALQIFLALFGFVFACYVSKVFLEEEDSFDFIGGFDSYGYQAPQKTSHLQLQPLYTSG</sequence>
<reference key="1">
    <citation type="journal article" date="2007" name="Hum. Mol. Genet.">
        <title>A novel family of transmembrane proteins interacting with beta subunits of the Na,K-ATPase.</title>
        <authorList>
            <person name="Gorokhova S."/>
            <person name="Bibert S."/>
            <person name="Geering K."/>
            <person name="Heintz N."/>
        </authorList>
    </citation>
    <scope>NUCLEOTIDE SEQUENCE [MRNA]</scope>
    <scope>INTERACTION WITH ATP1B1</scope>
    <scope>TISSUE SPECIFICITY</scope>
    <source>
        <strain>C57BL/6J</strain>
    </source>
</reference>
<reference key="2">
    <citation type="journal article" date="2005" name="Science">
        <title>The transcriptional landscape of the mammalian genome.</title>
        <authorList>
            <person name="Carninci P."/>
            <person name="Kasukawa T."/>
            <person name="Katayama S."/>
            <person name="Gough J."/>
            <person name="Frith M.C."/>
            <person name="Maeda N."/>
            <person name="Oyama R."/>
            <person name="Ravasi T."/>
            <person name="Lenhard B."/>
            <person name="Wells C."/>
            <person name="Kodzius R."/>
            <person name="Shimokawa K."/>
            <person name="Bajic V.B."/>
            <person name="Brenner S.E."/>
            <person name="Batalov S."/>
            <person name="Forrest A.R."/>
            <person name="Zavolan M."/>
            <person name="Davis M.J."/>
            <person name="Wilming L.G."/>
            <person name="Aidinis V."/>
            <person name="Allen J.E."/>
            <person name="Ambesi-Impiombato A."/>
            <person name="Apweiler R."/>
            <person name="Aturaliya R.N."/>
            <person name="Bailey T.L."/>
            <person name="Bansal M."/>
            <person name="Baxter L."/>
            <person name="Beisel K.W."/>
            <person name="Bersano T."/>
            <person name="Bono H."/>
            <person name="Chalk A.M."/>
            <person name="Chiu K.P."/>
            <person name="Choudhary V."/>
            <person name="Christoffels A."/>
            <person name="Clutterbuck D.R."/>
            <person name="Crowe M.L."/>
            <person name="Dalla E."/>
            <person name="Dalrymple B.P."/>
            <person name="de Bono B."/>
            <person name="Della Gatta G."/>
            <person name="di Bernardo D."/>
            <person name="Down T."/>
            <person name="Engstrom P."/>
            <person name="Fagiolini M."/>
            <person name="Faulkner G."/>
            <person name="Fletcher C.F."/>
            <person name="Fukushima T."/>
            <person name="Furuno M."/>
            <person name="Futaki S."/>
            <person name="Gariboldi M."/>
            <person name="Georgii-Hemming P."/>
            <person name="Gingeras T.R."/>
            <person name="Gojobori T."/>
            <person name="Green R.E."/>
            <person name="Gustincich S."/>
            <person name="Harbers M."/>
            <person name="Hayashi Y."/>
            <person name="Hensch T.K."/>
            <person name="Hirokawa N."/>
            <person name="Hill D."/>
            <person name="Huminiecki L."/>
            <person name="Iacono M."/>
            <person name="Ikeo K."/>
            <person name="Iwama A."/>
            <person name="Ishikawa T."/>
            <person name="Jakt M."/>
            <person name="Kanapin A."/>
            <person name="Katoh M."/>
            <person name="Kawasawa Y."/>
            <person name="Kelso J."/>
            <person name="Kitamura H."/>
            <person name="Kitano H."/>
            <person name="Kollias G."/>
            <person name="Krishnan S.P."/>
            <person name="Kruger A."/>
            <person name="Kummerfeld S.K."/>
            <person name="Kurochkin I.V."/>
            <person name="Lareau L.F."/>
            <person name="Lazarevic D."/>
            <person name="Lipovich L."/>
            <person name="Liu J."/>
            <person name="Liuni S."/>
            <person name="McWilliam S."/>
            <person name="Madan Babu M."/>
            <person name="Madera M."/>
            <person name="Marchionni L."/>
            <person name="Matsuda H."/>
            <person name="Matsuzawa S."/>
            <person name="Miki H."/>
            <person name="Mignone F."/>
            <person name="Miyake S."/>
            <person name="Morris K."/>
            <person name="Mottagui-Tabar S."/>
            <person name="Mulder N."/>
            <person name="Nakano N."/>
            <person name="Nakauchi H."/>
            <person name="Ng P."/>
            <person name="Nilsson R."/>
            <person name="Nishiguchi S."/>
            <person name="Nishikawa S."/>
            <person name="Nori F."/>
            <person name="Ohara O."/>
            <person name="Okazaki Y."/>
            <person name="Orlando V."/>
            <person name="Pang K.C."/>
            <person name="Pavan W.J."/>
            <person name="Pavesi G."/>
            <person name="Pesole G."/>
            <person name="Petrovsky N."/>
            <person name="Piazza S."/>
            <person name="Reed J."/>
            <person name="Reid J.F."/>
            <person name="Ring B.Z."/>
            <person name="Ringwald M."/>
            <person name="Rost B."/>
            <person name="Ruan Y."/>
            <person name="Salzberg S.L."/>
            <person name="Sandelin A."/>
            <person name="Schneider C."/>
            <person name="Schoenbach C."/>
            <person name="Sekiguchi K."/>
            <person name="Semple C.A."/>
            <person name="Seno S."/>
            <person name="Sessa L."/>
            <person name="Sheng Y."/>
            <person name="Shibata Y."/>
            <person name="Shimada H."/>
            <person name="Shimada K."/>
            <person name="Silva D."/>
            <person name="Sinclair B."/>
            <person name="Sperling S."/>
            <person name="Stupka E."/>
            <person name="Sugiura K."/>
            <person name="Sultana R."/>
            <person name="Takenaka Y."/>
            <person name="Taki K."/>
            <person name="Tammoja K."/>
            <person name="Tan S.L."/>
            <person name="Tang S."/>
            <person name="Taylor M.S."/>
            <person name="Tegner J."/>
            <person name="Teichmann S.A."/>
            <person name="Ueda H.R."/>
            <person name="van Nimwegen E."/>
            <person name="Verardo R."/>
            <person name="Wei C.L."/>
            <person name="Yagi K."/>
            <person name="Yamanishi H."/>
            <person name="Zabarovsky E."/>
            <person name="Zhu S."/>
            <person name="Zimmer A."/>
            <person name="Hide W."/>
            <person name="Bult C."/>
            <person name="Grimmond S.M."/>
            <person name="Teasdale R.D."/>
            <person name="Liu E.T."/>
            <person name="Brusic V."/>
            <person name="Quackenbush J."/>
            <person name="Wahlestedt C."/>
            <person name="Mattick J.S."/>
            <person name="Hume D.A."/>
            <person name="Kai C."/>
            <person name="Sasaki D."/>
            <person name="Tomaru Y."/>
            <person name="Fukuda S."/>
            <person name="Kanamori-Katayama M."/>
            <person name="Suzuki M."/>
            <person name="Aoki J."/>
            <person name="Arakawa T."/>
            <person name="Iida J."/>
            <person name="Imamura K."/>
            <person name="Itoh M."/>
            <person name="Kato T."/>
            <person name="Kawaji H."/>
            <person name="Kawagashira N."/>
            <person name="Kawashima T."/>
            <person name="Kojima M."/>
            <person name="Kondo S."/>
            <person name="Konno H."/>
            <person name="Nakano K."/>
            <person name="Ninomiya N."/>
            <person name="Nishio T."/>
            <person name="Okada M."/>
            <person name="Plessy C."/>
            <person name="Shibata K."/>
            <person name="Shiraki T."/>
            <person name="Suzuki S."/>
            <person name="Tagami M."/>
            <person name="Waki K."/>
            <person name="Watahiki A."/>
            <person name="Okamura-Oho Y."/>
            <person name="Suzuki H."/>
            <person name="Kawai J."/>
            <person name="Hayashizaki Y."/>
        </authorList>
    </citation>
    <scope>NUCLEOTIDE SEQUENCE [LARGE SCALE MRNA]</scope>
    <source>
        <strain>C57BL/6J</strain>
    </source>
</reference>
<reference key="3">
    <citation type="journal article" date="2004" name="Genome Res.">
        <title>The status, quality, and expansion of the NIH full-length cDNA project: the Mammalian Gene Collection (MGC).</title>
        <authorList>
            <consortium name="The MGC Project Team"/>
        </authorList>
    </citation>
    <scope>NUCLEOTIDE SEQUENCE [LARGE SCALE MRNA]</scope>
</reference>
<name>NKAI1_MOUSE</name>
<proteinExistence type="evidence at protein level"/>
<comment type="subunit">
    <text evidence="2">Interacts with ATP1B1 C-terminus.</text>
</comment>
<comment type="subcellular location">
    <subcellularLocation>
        <location evidence="3">Cell membrane</location>
        <topology evidence="3">Multi-pass membrane protein</topology>
    </subcellularLocation>
</comment>
<comment type="tissue specificity">
    <text evidence="2">Detected in the brain only and specifically in neurons. Expressed in multiple regions such as cerebral cortex, thalamus, hippocampus, olfactory bulb and brainstem as well as in cerebellum with high expression in granular cell layer.</text>
</comment>
<comment type="similarity">
    <text evidence="3">Belongs to the NKAIN family.</text>
</comment>
<accession>Q9D035</accession>
<accession>A6MHP4</accession>
<accession>Q9D0Q6</accession>
<evidence type="ECO:0000255" key="1"/>
<evidence type="ECO:0000269" key="2">
    <source>
    </source>
</evidence>
<evidence type="ECO:0000305" key="3"/>
<protein>
    <recommendedName>
        <fullName>Sodium/potassium-transporting ATPase subunit beta-1-interacting protein 1</fullName>
        <shortName>Na(+)/K(+)-transporting ATPase subunit beta-1-interacting protein 1</shortName>
    </recommendedName>
    <alternativeName>
        <fullName>Protein FAM77C</fullName>
    </alternativeName>
</protein>
<organism>
    <name type="scientific">Mus musculus</name>
    <name type="common">Mouse</name>
    <dbReference type="NCBI Taxonomy" id="10090"/>
    <lineage>
        <taxon>Eukaryota</taxon>
        <taxon>Metazoa</taxon>
        <taxon>Chordata</taxon>
        <taxon>Craniata</taxon>
        <taxon>Vertebrata</taxon>
        <taxon>Euteleostomi</taxon>
        <taxon>Mammalia</taxon>
        <taxon>Eutheria</taxon>
        <taxon>Euarchontoglires</taxon>
        <taxon>Glires</taxon>
        <taxon>Rodentia</taxon>
        <taxon>Myomorpha</taxon>
        <taxon>Muroidea</taxon>
        <taxon>Muridae</taxon>
        <taxon>Murinae</taxon>
        <taxon>Mus</taxon>
        <taxon>Mus</taxon>
    </lineage>
</organism>
<dbReference type="EMBL" id="EF058048">
    <property type="protein sequence ID" value="ABN51166.1"/>
    <property type="molecule type" value="mRNA"/>
</dbReference>
<dbReference type="EMBL" id="AK011164">
    <property type="protein sequence ID" value="BAB27441.1"/>
    <property type="molecule type" value="mRNA"/>
</dbReference>
<dbReference type="EMBL" id="AK011850">
    <property type="protein sequence ID" value="BAB27879.1"/>
    <property type="molecule type" value="mRNA"/>
</dbReference>
<dbReference type="EMBL" id="BC116391">
    <property type="protein sequence ID" value="AAI16392.1"/>
    <property type="molecule type" value="mRNA"/>
</dbReference>
<dbReference type="CCDS" id="CCDS57302.1"/>
<dbReference type="RefSeq" id="NP_080274.2">
    <property type="nucleotide sequence ID" value="NM_025998.5"/>
</dbReference>
<dbReference type="FunCoup" id="Q9D035">
    <property type="interactions" value="876"/>
</dbReference>
<dbReference type="STRING" id="10090.ENSMUSP00000101614"/>
<dbReference type="GlyCosmos" id="Q9D035">
    <property type="glycosylation" value="1 site, No reported glycans"/>
</dbReference>
<dbReference type="GlyGen" id="Q9D035">
    <property type="glycosylation" value="1 site, 1 N-linked glycan (1 site)"/>
</dbReference>
<dbReference type="iPTMnet" id="Q9D035"/>
<dbReference type="PhosphoSitePlus" id="Q9D035"/>
<dbReference type="PaxDb" id="10090-ENSMUSP00000101614"/>
<dbReference type="ProteomicsDB" id="253077"/>
<dbReference type="Antibodypedia" id="16738">
    <property type="antibodies" value="75 antibodies from 16 providers"/>
</dbReference>
<dbReference type="Ensembl" id="ENSMUST00000105993.4">
    <property type="protein sequence ID" value="ENSMUSP00000101614.3"/>
    <property type="gene ID" value="ENSMUSG00000078532.10"/>
</dbReference>
<dbReference type="GeneID" id="67149"/>
<dbReference type="KEGG" id="mmu:67149"/>
<dbReference type="UCSC" id="uc008uzi.2">
    <property type="organism name" value="mouse"/>
</dbReference>
<dbReference type="AGR" id="MGI:1914399"/>
<dbReference type="CTD" id="79570"/>
<dbReference type="MGI" id="MGI:1914399">
    <property type="gene designation" value="Nkain1"/>
</dbReference>
<dbReference type="VEuPathDB" id="HostDB:ENSMUSG00000078532"/>
<dbReference type="eggNOG" id="KOG4556">
    <property type="taxonomic scope" value="Eukaryota"/>
</dbReference>
<dbReference type="GeneTree" id="ENSGT00940000159949"/>
<dbReference type="HOGENOM" id="CLU_090781_0_0_1"/>
<dbReference type="InParanoid" id="Q9D035"/>
<dbReference type="OMA" id="DSHMAPD"/>
<dbReference type="OrthoDB" id="10050321at2759"/>
<dbReference type="PhylomeDB" id="Q9D035"/>
<dbReference type="TreeFam" id="TF321348"/>
<dbReference type="BioGRID-ORCS" id="67149">
    <property type="hits" value="1 hit in 63 CRISPR screens"/>
</dbReference>
<dbReference type="ChiTaRS" id="Nkain1">
    <property type="organism name" value="mouse"/>
</dbReference>
<dbReference type="PRO" id="PR:Q9D035"/>
<dbReference type="Proteomes" id="UP000000589">
    <property type="component" value="Chromosome 4"/>
</dbReference>
<dbReference type="RNAct" id="Q9D035">
    <property type="molecule type" value="protein"/>
</dbReference>
<dbReference type="Bgee" id="ENSMUSG00000078532">
    <property type="expression patterns" value="Expressed in embryonic brain and 116 other cell types or tissues"/>
</dbReference>
<dbReference type="ExpressionAtlas" id="Q9D035">
    <property type="expression patterns" value="baseline and differential"/>
</dbReference>
<dbReference type="GO" id="GO:0005886">
    <property type="term" value="C:plasma membrane"/>
    <property type="evidence" value="ECO:0000314"/>
    <property type="project" value="MGI"/>
</dbReference>
<dbReference type="GO" id="GO:0051117">
    <property type="term" value="F:ATPase binding"/>
    <property type="evidence" value="ECO:0000353"/>
    <property type="project" value="MGI"/>
</dbReference>
<dbReference type="InterPro" id="IPR008516">
    <property type="entry name" value="Na/K-Atpase_Interacting"/>
</dbReference>
<dbReference type="PANTHER" id="PTHR13084:SF4">
    <property type="entry name" value="SODIUM_POTASSIUM-TRANSPORTING ATPASE SUBUNIT BETA-1-INTERACTING PROTEIN 1"/>
    <property type="match status" value="1"/>
</dbReference>
<dbReference type="PANTHER" id="PTHR13084">
    <property type="entry name" value="T-CELL LYMPHOMA BREAKPOINT-ASSOCIATED TARGET 1-RELATED"/>
    <property type="match status" value="1"/>
</dbReference>
<dbReference type="Pfam" id="PF05640">
    <property type="entry name" value="NKAIN"/>
    <property type="match status" value="1"/>
</dbReference>